<feature type="transit peptide" description="Mitochondrion" evidence="3">
    <location>
        <begin position="1"/>
        <end position="84"/>
    </location>
</feature>
<feature type="chain" id="PRO_0000289796" description="Oxaloacetate tautomerase FAHD2B, mitochondrial" evidence="3">
    <location>
        <begin position="85"/>
        <end position="314"/>
    </location>
</feature>
<feature type="binding site" evidence="2">
    <location>
        <position position="159"/>
    </location>
    <ligand>
        <name>Mg(2+)</name>
        <dbReference type="ChEBI" id="CHEBI:18420"/>
    </ligand>
</feature>
<feature type="binding site" evidence="2">
    <location>
        <position position="161"/>
    </location>
    <ligand>
        <name>Mg(2+)</name>
        <dbReference type="ChEBI" id="CHEBI:18420"/>
    </ligand>
</feature>
<feature type="binding site" evidence="2">
    <location>
        <position position="190"/>
    </location>
    <ligand>
        <name>Mg(2+)</name>
        <dbReference type="ChEBI" id="CHEBI:18420"/>
    </ligand>
</feature>
<feature type="sequence conflict" description="In Ref. 4; CAD38727." evidence="6" ref="4">
    <original>R</original>
    <variation>W</variation>
    <location>
        <position position="33"/>
    </location>
</feature>
<comment type="function">
    <text evidence="4">Tautomerase that converts enol-oxaloacetate, a strong inhibitor of succinate dehydrogenase, to the physiological keto form of oxaloacetate (PubMed:38287013). It is thereby required to maximize aerobic respiration efficiency by preventing succinate dehydrogenase inhibition (PubMed:38287013).</text>
</comment>
<comment type="catalytic activity">
    <reaction evidence="4">
        <text>oxaloacetate = enol-oxaloacetate</text>
        <dbReference type="Rhea" id="RHEA:16021"/>
        <dbReference type="ChEBI" id="CHEBI:16452"/>
        <dbReference type="ChEBI" id="CHEBI:17479"/>
        <dbReference type="EC" id="5.3.2.2"/>
    </reaction>
    <physiologicalReaction direction="right-to-left" evidence="4">
        <dbReference type="Rhea" id="RHEA:16023"/>
    </physiologicalReaction>
</comment>
<comment type="cofactor">
    <cofactor evidence="2">
        <name>Mg(2+)</name>
        <dbReference type="ChEBI" id="CHEBI:18420"/>
    </cofactor>
    <cofactor evidence="2">
        <name>Mn(2+)</name>
        <dbReference type="ChEBI" id="CHEBI:29035"/>
    </cofactor>
    <text evidence="2">Requires a divalent metal cation for activity.</text>
</comment>
<comment type="biophysicochemical properties">
    <kinetics>
        <KM evidence="4">296 uM for enol-oxaloacetate</KM>
        <Vmax evidence="4">112.0 umol/min/mg enzyme</Vmax>
        <text evidence="4">kcat is 68.7 sec(-1) with enol-oxaloacetate as substrate.</text>
    </kinetics>
</comment>
<comment type="subcellular location">
    <subcellularLocation>
        <location evidence="1">Mitochondrion</location>
    </subcellularLocation>
</comment>
<comment type="similarity">
    <text evidence="6">Belongs to the FAH family.</text>
</comment>
<sequence length="314" mass="34613">MLVSGRRRLLTALLQAQKWPFQPSRDMRLVQFRAPHLVGPHLGLETGNGGGVINLNAFDPTLPKTMTQFLEQGEATLSVARRALAAQLPVLPWSEVTFLAPVTWPDKVVCVGMNYVDHCKEQNVPVPKEPIIFSKFASSIVGPYDEVVLPPQSQEVDWEVELAVVIGKKGKHIKATDAMAHVAGFTVAHDVSARDWLTRRNGKQWLLGKTFDTFCPLGPALVTKDSVADPHNLKICCRVNGEVVQSSNTNQMVFKTEDLIAWVSQFVTFYPGDVILTGTPPGVGVFRKPPVFLKKGDEVQCEIEELGVIINKVV</sequence>
<keyword id="KW-0413">Isomerase</keyword>
<keyword id="KW-0460">Magnesium</keyword>
<keyword id="KW-0479">Metal-binding</keyword>
<keyword id="KW-0496">Mitochondrion</keyword>
<keyword id="KW-1267">Proteomics identification</keyword>
<keyword id="KW-1185">Reference proteome</keyword>
<keyword id="KW-0809">Transit peptide</keyword>
<gene>
    <name evidence="5 7" type="primary">FAHD2B</name>
</gene>
<evidence type="ECO:0000250" key="1">
    <source>
        <dbReference type="UniProtKB" id="Q2KIB0"/>
    </source>
</evidence>
<evidence type="ECO:0000250" key="2">
    <source>
        <dbReference type="UniProtKB" id="Q6P587"/>
    </source>
</evidence>
<evidence type="ECO:0000255" key="3"/>
<evidence type="ECO:0000269" key="4">
    <source>
    </source>
</evidence>
<evidence type="ECO:0000303" key="5">
    <source>
    </source>
</evidence>
<evidence type="ECO:0000305" key="6"/>
<evidence type="ECO:0000312" key="7">
    <source>
        <dbReference type="HGNC" id="HGNC:25318"/>
    </source>
</evidence>
<proteinExistence type="evidence at protein level"/>
<reference key="1">
    <citation type="journal article" date="2005" name="Nature">
        <title>Generation and annotation of the DNA sequences of human chromosomes 2 and 4.</title>
        <authorList>
            <person name="Hillier L.W."/>
            <person name="Graves T.A."/>
            <person name="Fulton R.S."/>
            <person name="Fulton L.A."/>
            <person name="Pepin K.H."/>
            <person name="Minx P."/>
            <person name="Wagner-McPherson C."/>
            <person name="Layman D."/>
            <person name="Wylie K."/>
            <person name="Sekhon M."/>
            <person name="Becker M.C."/>
            <person name="Fewell G.A."/>
            <person name="Delehaunty K.D."/>
            <person name="Miner T.L."/>
            <person name="Nash W.E."/>
            <person name="Kremitzki C."/>
            <person name="Oddy L."/>
            <person name="Du H."/>
            <person name="Sun H."/>
            <person name="Bradshaw-Cordum H."/>
            <person name="Ali J."/>
            <person name="Carter J."/>
            <person name="Cordes M."/>
            <person name="Harris A."/>
            <person name="Isak A."/>
            <person name="van Brunt A."/>
            <person name="Nguyen C."/>
            <person name="Du F."/>
            <person name="Courtney L."/>
            <person name="Kalicki J."/>
            <person name="Ozersky P."/>
            <person name="Abbott S."/>
            <person name="Armstrong J."/>
            <person name="Belter E.A."/>
            <person name="Caruso L."/>
            <person name="Cedroni M."/>
            <person name="Cotton M."/>
            <person name="Davidson T."/>
            <person name="Desai A."/>
            <person name="Elliott G."/>
            <person name="Erb T."/>
            <person name="Fronick C."/>
            <person name="Gaige T."/>
            <person name="Haakenson W."/>
            <person name="Haglund K."/>
            <person name="Holmes A."/>
            <person name="Harkins R."/>
            <person name="Kim K."/>
            <person name="Kruchowski S.S."/>
            <person name="Strong C.M."/>
            <person name="Grewal N."/>
            <person name="Goyea E."/>
            <person name="Hou S."/>
            <person name="Levy A."/>
            <person name="Martinka S."/>
            <person name="Mead K."/>
            <person name="McLellan M.D."/>
            <person name="Meyer R."/>
            <person name="Randall-Maher J."/>
            <person name="Tomlinson C."/>
            <person name="Dauphin-Kohlberg S."/>
            <person name="Kozlowicz-Reilly A."/>
            <person name="Shah N."/>
            <person name="Swearengen-Shahid S."/>
            <person name="Snider J."/>
            <person name="Strong J.T."/>
            <person name="Thompson J."/>
            <person name="Yoakum M."/>
            <person name="Leonard S."/>
            <person name="Pearman C."/>
            <person name="Trani L."/>
            <person name="Radionenko M."/>
            <person name="Waligorski J.E."/>
            <person name="Wang C."/>
            <person name="Rock S.M."/>
            <person name="Tin-Wollam A.-M."/>
            <person name="Maupin R."/>
            <person name="Latreille P."/>
            <person name="Wendl M.C."/>
            <person name="Yang S.-P."/>
            <person name="Pohl C."/>
            <person name="Wallis J.W."/>
            <person name="Spieth J."/>
            <person name="Bieri T.A."/>
            <person name="Berkowicz N."/>
            <person name="Nelson J.O."/>
            <person name="Osborne J."/>
            <person name="Ding L."/>
            <person name="Meyer R."/>
            <person name="Sabo A."/>
            <person name="Shotland Y."/>
            <person name="Sinha P."/>
            <person name="Wohldmann P.E."/>
            <person name="Cook L.L."/>
            <person name="Hickenbotham M.T."/>
            <person name="Eldred J."/>
            <person name="Williams D."/>
            <person name="Jones T.A."/>
            <person name="She X."/>
            <person name="Ciccarelli F.D."/>
            <person name="Izaurralde E."/>
            <person name="Taylor J."/>
            <person name="Schmutz J."/>
            <person name="Myers R.M."/>
            <person name="Cox D.R."/>
            <person name="Huang X."/>
            <person name="McPherson J.D."/>
            <person name="Mardis E.R."/>
            <person name="Clifton S.W."/>
            <person name="Warren W.C."/>
            <person name="Chinwalla A.T."/>
            <person name="Eddy S.R."/>
            <person name="Marra M.A."/>
            <person name="Ovcharenko I."/>
            <person name="Furey T.S."/>
            <person name="Miller W."/>
            <person name="Eichler E.E."/>
            <person name="Bork P."/>
            <person name="Suyama M."/>
            <person name="Torrents D."/>
            <person name="Waterston R.H."/>
            <person name="Wilson R.K."/>
        </authorList>
    </citation>
    <scope>NUCLEOTIDE SEQUENCE [LARGE SCALE GENOMIC DNA]</scope>
</reference>
<reference key="2">
    <citation type="submission" date="2005-09" db="EMBL/GenBank/DDBJ databases">
        <authorList>
            <person name="Mural R.J."/>
            <person name="Istrail S."/>
            <person name="Sutton G.G."/>
            <person name="Florea L."/>
            <person name="Halpern A.L."/>
            <person name="Mobarry C.M."/>
            <person name="Lippert R."/>
            <person name="Walenz B."/>
            <person name="Shatkay H."/>
            <person name="Dew I."/>
            <person name="Miller J.R."/>
            <person name="Flanigan M.J."/>
            <person name="Edwards N.J."/>
            <person name="Bolanos R."/>
            <person name="Fasulo D."/>
            <person name="Halldorsson B.V."/>
            <person name="Hannenhalli S."/>
            <person name="Turner R."/>
            <person name="Yooseph S."/>
            <person name="Lu F."/>
            <person name="Nusskern D.R."/>
            <person name="Shue B.C."/>
            <person name="Zheng X.H."/>
            <person name="Zhong F."/>
            <person name="Delcher A.L."/>
            <person name="Huson D.H."/>
            <person name="Kravitz S.A."/>
            <person name="Mouchard L."/>
            <person name="Reinert K."/>
            <person name="Remington K.A."/>
            <person name="Clark A.G."/>
            <person name="Waterman M.S."/>
            <person name="Eichler E.E."/>
            <person name="Adams M.D."/>
            <person name="Hunkapiller M.W."/>
            <person name="Myers E.W."/>
            <person name="Venter J.C."/>
        </authorList>
    </citation>
    <scope>NUCLEOTIDE SEQUENCE [LARGE SCALE GENOMIC DNA]</scope>
</reference>
<reference key="3">
    <citation type="journal article" date="2004" name="Genome Res.">
        <title>The status, quality, and expansion of the NIH full-length cDNA project: the Mammalian Gene Collection (MGC).</title>
        <authorList>
            <consortium name="The MGC Project Team"/>
        </authorList>
    </citation>
    <scope>NUCLEOTIDE SEQUENCE [LARGE SCALE MRNA]</scope>
    <source>
        <tissue>Ovary</tissue>
    </source>
</reference>
<reference key="4">
    <citation type="journal article" date="2007" name="BMC Genomics">
        <title>The full-ORF clone resource of the German cDNA consortium.</title>
        <authorList>
            <person name="Bechtel S."/>
            <person name="Rosenfelder H."/>
            <person name="Duda A."/>
            <person name="Schmidt C.P."/>
            <person name="Ernst U."/>
            <person name="Wellenreuther R."/>
            <person name="Mehrle A."/>
            <person name="Schuster C."/>
            <person name="Bahr A."/>
            <person name="Bloecker H."/>
            <person name="Heubner D."/>
            <person name="Hoerlein A."/>
            <person name="Michel G."/>
            <person name="Wedler H."/>
            <person name="Koehrer K."/>
            <person name="Ottenwaelder B."/>
            <person name="Poustka A."/>
            <person name="Wiemann S."/>
            <person name="Schupp I."/>
        </authorList>
    </citation>
    <scope>NUCLEOTIDE SEQUENCE [LARGE SCALE MRNA] OF 5-314</scope>
    <source>
        <tissue>Testis</tissue>
    </source>
</reference>
<reference key="5">
    <citation type="journal article" date="2015" name="Proteomics">
        <title>N-terminome analysis of the human mitochondrial proteome.</title>
        <authorList>
            <person name="Vaca Jacome A.S."/>
            <person name="Rabilloud T."/>
            <person name="Schaeffer-Reiss C."/>
            <person name="Rompais M."/>
            <person name="Ayoub D."/>
            <person name="Lane L."/>
            <person name="Bairoch A."/>
            <person name="Van Dorsselaer A."/>
            <person name="Carapito C."/>
        </authorList>
    </citation>
    <scope>IDENTIFICATION BY MASS SPECTROMETRY [LARGE SCALE ANALYSIS]</scope>
</reference>
<reference key="6">
    <citation type="journal article" date="2024" name="Nat. Commun.">
        <title>A universal metabolite repair enzyme removes a strong inhibitor of the TCA cycle.</title>
        <authorList>
            <person name="Zmuda A.J."/>
            <person name="Kang X."/>
            <person name="Wissbroecker K.B."/>
            <person name="Freund Saxhaug K."/>
            <person name="Costa K.C."/>
            <person name="Hegeman A.D."/>
            <person name="Niehaus T.D."/>
        </authorList>
    </citation>
    <scope>FUNCTION</scope>
    <scope>CATALYTIC ACTIVITY</scope>
    <scope>BIOPHYSICOCHEMICAL PROPERTIES</scope>
</reference>
<accession>Q6P2I3</accession>
<accession>D3DXH7</accession>
<accession>Q8NDK1</accession>
<protein>
    <recommendedName>
        <fullName evidence="6">Oxaloacetate tautomerase FAHD2B, mitochondrial</fullName>
        <ecNumber evidence="4">5.3.2.2</ecNumber>
    </recommendedName>
    <alternativeName>
        <fullName evidence="6">Fumarylacetoacetate hydrolase domain-containing protein 2B</fullName>
    </alternativeName>
</protein>
<dbReference type="EC" id="5.3.2.2" evidence="4"/>
<dbReference type="EMBL" id="AC018892">
    <property type="protein sequence ID" value="AAY14641.1"/>
    <property type="molecule type" value="Genomic_DNA"/>
</dbReference>
<dbReference type="EMBL" id="CH471207">
    <property type="protein sequence ID" value="EAW71310.1"/>
    <property type="molecule type" value="Genomic_DNA"/>
</dbReference>
<dbReference type="EMBL" id="CH471207">
    <property type="protein sequence ID" value="EAW71311.1"/>
    <property type="molecule type" value="Genomic_DNA"/>
</dbReference>
<dbReference type="EMBL" id="CH471207">
    <property type="protein sequence ID" value="EAW71312.1"/>
    <property type="molecule type" value="Genomic_DNA"/>
</dbReference>
<dbReference type="EMBL" id="CH471207">
    <property type="protein sequence ID" value="EAW71313.1"/>
    <property type="molecule type" value="Genomic_DNA"/>
</dbReference>
<dbReference type="EMBL" id="CH471207">
    <property type="protein sequence ID" value="EAW71314.1"/>
    <property type="molecule type" value="Genomic_DNA"/>
</dbReference>
<dbReference type="EMBL" id="BC064511">
    <property type="protein sequence ID" value="AAH64511.1"/>
    <property type="molecule type" value="mRNA"/>
</dbReference>
<dbReference type="EMBL" id="AL833869">
    <property type="protein sequence ID" value="CAD38727.1"/>
    <property type="molecule type" value="mRNA"/>
</dbReference>
<dbReference type="CCDS" id="CCDS2030.1"/>
<dbReference type="RefSeq" id="NP_001307777.1">
    <property type="nucleotide sequence ID" value="NM_001320848.2"/>
</dbReference>
<dbReference type="RefSeq" id="NP_955368.1">
    <property type="nucleotide sequence ID" value="NM_199336.3"/>
</dbReference>
<dbReference type="RefSeq" id="XP_024308498.1">
    <property type="nucleotide sequence ID" value="XM_024452730.2"/>
</dbReference>
<dbReference type="RefSeq" id="XP_054188882.1">
    <property type="nucleotide sequence ID" value="XM_054332907.1"/>
</dbReference>
<dbReference type="RefSeq" id="XP_054196760.1">
    <property type="nucleotide sequence ID" value="XM_054340785.1"/>
</dbReference>
<dbReference type="SMR" id="Q6P2I3"/>
<dbReference type="BioGRID" id="127368">
    <property type="interactions" value="18"/>
</dbReference>
<dbReference type="FunCoup" id="Q6P2I3">
    <property type="interactions" value="41"/>
</dbReference>
<dbReference type="IntAct" id="Q6P2I3">
    <property type="interactions" value="11"/>
</dbReference>
<dbReference type="STRING" id="9606.ENSP00000410470"/>
<dbReference type="iPTMnet" id="Q6P2I3"/>
<dbReference type="PhosphoSitePlus" id="Q6P2I3"/>
<dbReference type="BioMuta" id="FAHD2B"/>
<dbReference type="DMDM" id="74737217"/>
<dbReference type="jPOST" id="Q6P2I3"/>
<dbReference type="MassIVE" id="Q6P2I3"/>
<dbReference type="PaxDb" id="9606-ENSP00000410470"/>
<dbReference type="PeptideAtlas" id="Q6P2I3"/>
<dbReference type="ProteomicsDB" id="66906"/>
<dbReference type="Pumba" id="Q6P2I3"/>
<dbReference type="Antibodypedia" id="68953">
    <property type="antibodies" value="52 antibodies from 12 providers"/>
</dbReference>
<dbReference type="DNASU" id="151313"/>
<dbReference type="Ensembl" id="ENST00000272610.3">
    <property type="protein sequence ID" value="ENSP00000272610.3"/>
    <property type="gene ID" value="ENSG00000144199.13"/>
</dbReference>
<dbReference type="Ensembl" id="ENST00000414820.6">
    <property type="protein sequence ID" value="ENSP00000410470.2"/>
    <property type="gene ID" value="ENSG00000144199.13"/>
</dbReference>
<dbReference type="Ensembl" id="ENST00000708045.1">
    <property type="protein sequence ID" value="ENSP00000517078.1"/>
    <property type="gene ID" value="ENSG00000291581.1"/>
</dbReference>
<dbReference type="Ensembl" id="ENST00000708046.1">
    <property type="protein sequence ID" value="ENSP00000517079.1"/>
    <property type="gene ID" value="ENSG00000291581.1"/>
</dbReference>
<dbReference type="GeneID" id="151313"/>
<dbReference type="KEGG" id="hsa:151313"/>
<dbReference type="MANE-Select" id="ENST00000414820.6">
    <property type="protein sequence ID" value="ENSP00000410470.2"/>
    <property type="RefSeq nucleotide sequence ID" value="NM_001320848.2"/>
    <property type="RefSeq protein sequence ID" value="NP_001307777.1"/>
</dbReference>
<dbReference type="UCSC" id="uc002sxm.4">
    <property type="organism name" value="human"/>
</dbReference>
<dbReference type="AGR" id="HGNC:25318"/>
<dbReference type="CTD" id="151313"/>
<dbReference type="DisGeNET" id="151313"/>
<dbReference type="GeneCards" id="FAHD2B"/>
<dbReference type="HGNC" id="HGNC:25318">
    <property type="gene designation" value="FAHD2B"/>
</dbReference>
<dbReference type="HPA" id="ENSG00000144199">
    <property type="expression patterns" value="Low tissue specificity"/>
</dbReference>
<dbReference type="neXtProt" id="NX_Q6P2I3"/>
<dbReference type="OpenTargets" id="ENSG00000144199"/>
<dbReference type="PharmGKB" id="PA162385597"/>
<dbReference type="VEuPathDB" id="HostDB:ENSG00000144199"/>
<dbReference type="eggNOG" id="KOG1535">
    <property type="taxonomic scope" value="Eukaryota"/>
</dbReference>
<dbReference type="GeneTree" id="ENSGT00940000164887"/>
<dbReference type="HOGENOM" id="CLU_028458_3_2_1"/>
<dbReference type="InParanoid" id="Q6P2I3"/>
<dbReference type="OMA" id="YMHYECE"/>
<dbReference type="OrthoDB" id="411064at2759"/>
<dbReference type="PAN-GO" id="Q6P2I3">
    <property type="GO annotations" value="1 GO annotation based on evolutionary models"/>
</dbReference>
<dbReference type="PhylomeDB" id="Q6P2I3"/>
<dbReference type="TreeFam" id="TF300911"/>
<dbReference type="PathwayCommons" id="Q6P2I3"/>
<dbReference type="SignaLink" id="Q6P2I3"/>
<dbReference type="BioGRID-ORCS" id="151313">
    <property type="hits" value="43 hits in 1084 CRISPR screens"/>
</dbReference>
<dbReference type="ChiTaRS" id="FAHD2B">
    <property type="organism name" value="human"/>
</dbReference>
<dbReference type="GenomeRNAi" id="151313"/>
<dbReference type="Pharos" id="Q6P2I3">
    <property type="development level" value="Tdark"/>
</dbReference>
<dbReference type="PRO" id="PR:Q6P2I3"/>
<dbReference type="Proteomes" id="UP000005640">
    <property type="component" value="Chromosome 2"/>
</dbReference>
<dbReference type="RNAct" id="Q6P2I3">
    <property type="molecule type" value="protein"/>
</dbReference>
<dbReference type="Bgee" id="ENSG00000144199">
    <property type="expression patterns" value="Expressed in right hemisphere of cerebellum and 98 other cell types or tissues"/>
</dbReference>
<dbReference type="GO" id="GO:0005739">
    <property type="term" value="C:mitochondrion"/>
    <property type="evidence" value="ECO:0006056"/>
    <property type="project" value="FlyBase"/>
</dbReference>
<dbReference type="GO" id="GO:0046872">
    <property type="term" value="F:metal ion binding"/>
    <property type="evidence" value="ECO:0007669"/>
    <property type="project" value="UniProtKB-KW"/>
</dbReference>
<dbReference type="GO" id="GO:0050163">
    <property type="term" value="F:oxaloacetate tautomerase activity"/>
    <property type="evidence" value="ECO:0000314"/>
    <property type="project" value="UniProtKB"/>
</dbReference>
<dbReference type="GO" id="GO:0006107">
    <property type="term" value="P:oxaloacetate metabolic process"/>
    <property type="evidence" value="ECO:0000314"/>
    <property type="project" value="UniProtKB"/>
</dbReference>
<dbReference type="FunFam" id="3.90.850.10:FF:000002">
    <property type="entry name" value="2-hydroxyhepta-2,4-diene-1,7-dioate isomerase"/>
    <property type="match status" value="1"/>
</dbReference>
<dbReference type="Gene3D" id="3.90.850.10">
    <property type="entry name" value="Fumarylacetoacetase-like, C-terminal domain"/>
    <property type="match status" value="1"/>
</dbReference>
<dbReference type="InterPro" id="IPR051121">
    <property type="entry name" value="FAH"/>
</dbReference>
<dbReference type="InterPro" id="IPR011234">
    <property type="entry name" value="Fumarylacetoacetase-like_C"/>
</dbReference>
<dbReference type="InterPro" id="IPR036663">
    <property type="entry name" value="Fumarylacetoacetase_C_sf"/>
</dbReference>
<dbReference type="PANTHER" id="PTHR42796">
    <property type="entry name" value="FUMARYLACETOACETATE HYDROLASE DOMAIN-CONTAINING PROTEIN 2A-RELATED"/>
    <property type="match status" value="1"/>
</dbReference>
<dbReference type="PANTHER" id="PTHR42796:SF3">
    <property type="entry name" value="FUMARYLACETOACETATE HYDROLASE DOMAIN-CONTAINING PROTEIN 2A-RELATED"/>
    <property type="match status" value="1"/>
</dbReference>
<dbReference type="Pfam" id="PF01557">
    <property type="entry name" value="FAA_hydrolase"/>
    <property type="match status" value="1"/>
</dbReference>
<dbReference type="SUPFAM" id="SSF56529">
    <property type="entry name" value="FAH"/>
    <property type="match status" value="1"/>
</dbReference>
<organism>
    <name type="scientific">Homo sapiens</name>
    <name type="common">Human</name>
    <dbReference type="NCBI Taxonomy" id="9606"/>
    <lineage>
        <taxon>Eukaryota</taxon>
        <taxon>Metazoa</taxon>
        <taxon>Chordata</taxon>
        <taxon>Craniata</taxon>
        <taxon>Vertebrata</taxon>
        <taxon>Euteleostomi</taxon>
        <taxon>Mammalia</taxon>
        <taxon>Eutheria</taxon>
        <taxon>Euarchontoglires</taxon>
        <taxon>Primates</taxon>
        <taxon>Haplorrhini</taxon>
        <taxon>Catarrhini</taxon>
        <taxon>Hominidae</taxon>
        <taxon>Homo</taxon>
    </lineage>
</organism>
<name>FAH2B_HUMAN</name>